<dbReference type="EMBL" id="CP001029">
    <property type="protein sequence ID" value="ACB79168.1"/>
    <property type="molecule type" value="Genomic_DNA"/>
</dbReference>
<dbReference type="RefSeq" id="WP_012452920.1">
    <property type="nucleotide sequence ID" value="NC_010725.1"/>
</dbReference>
<dbReference type="SMR" id="B1ZA19"/>
<dbReference type="STRING" id="441620.Mpop_0991"/>
<dbReference type="KEGG" id="mpo:Mpop_0991"/>
<dbReference type="eggNOG" id="COG1381">
    <property type="taxonomic scope" value="Bacteria"/>
</dbReference>
<dbReference type="HOGENOM" id="CLU_086029_0_0_5"/>
<dbReference type="OrthoDB" id="9804792at2"/>
<dbReference type="Proteomes" id="UP000007136">
    <property type="component" value="Chromosome"/>
</dbReference>
<dbReference type="GO" id="GO:0043590">
    <property type="term" value="C:bacterial nucleoid"/>
    <property type="evidence" value="ECO:0007669"/>
    <property type="project" value="TreeGrafter"/>
</dbReference>
<dbReference type="GO" id="GO:0006310">
    <property type="term" value="P:DNA recombination"/>
    <property type="evidence" value="ECO:0007669"/>
    <property type="project" value="UniProtKB-UniRule"/>
</dbReference>
<dbReference type="GO" id="GO:0006302">
    <property type="term" value="P:double-strand break repair"/>
    <property type="evidence" value="ECO:0007669"/>
    <property type="project" value="TreeGrafter"/>
</dbReference>
<dbReference type="Gene3D" id="2.40.50.140">
    <property type="entry name" value="Nucleic acid-binding proteins"/>
    <property type="match status" value="1"/>
</dbReference>
<dbReference type="Gene3D" id="1.20.1440.120">
    <property type="entry name" value="Recombination protein O, C-terminal domain"/>
    <property type="match status" value="1"/>
</dbReference>
<dbReference type="HAMAP" id="MF_00201">
    <property type="entry name" value="RecO"/>
    <property type="match status" value="1"/>
</dbReference>
<dbReference type="InterPro" id="IPR037278">
    <property type="entry name" value="ARFGAP/RecO"/>
</dbReference>
<dbReference type="InterPro" id="IPR022572">
    <property type="entry name" value="DNA_rep/recomb_RecO_N"/>
</dbReference>
<dbReference type="InterPro" id="IPR012340">
    <property type="entry name" value="NA-bd_OB-fold"/>
</dbReference>
<dbReference type="InterPro" id="IPR003717">
    <property type="entry name" value="RecO"/>
</dbReference>
<dbReference type="InterPro" id="IPR042242">
    <property type="entry name" value="RecO_C"/>
</dbReference>
<dbReference type="NCBIfam" id="TIGR00613">
    <property type="entry name" value="reco"/>
    <property type="match status" value="1"/>
</dbReference>
<dbReference type="PANTHER" id="PTHR33991">
    <property type="entry name" value="DNA REPAIR PROTEIN RECO"/>
    <property type="match status" value="1"/>
</dbReference>
<dbReference type="PANTHER" id="PTHR33991:SF1">
    <property type="entry name" value="DNA REPAIR PROTEIN RECO"/>
    <property type="match status" value="1"/>
</dbReference>
<dbReference type="Pfam" id="PF02565">
    <property type="entry name" value="RecO_C"/>
    <property type="match status" value="1"/>
</dbReference>
<dbReference type="Pfam" id="PF11967">
    <property type="entry name" value="RecO_N"/>
    <property type="match status" value="1"/>
</dbReference>
<dbReference type="SUPFAM" id="SSF57863">
    <property type="entry name" value="ArfGap/RecO-like zinc finger"/>
    <property type="match status" value="1"/>
</dbReference>
<dbReference type="SUPFAM" id="SSF50249">
    <property type="entry name" value="Nucleic acid-binding proteins"/>
    <property type="match status" value="1"/>
</dbReference>
<comment type="function">
    <text evidence="1">Involved in DNA repair and RecF pathway recombination.</text>
</comment>
<comment type="similarity">
    <text evidence="1">Belongs to the RecO family.</text>
</comment>
<reference key="1">
    <citation type="submission" date="2008-04" db="EMBL/GenBank/DDBJ databases">
        <title>Complete sequence of chromosome of Methylobacterium populi BJ001.</title>
        <authorList>
            <consortium name="US DOE Joint Genome Institute"/>
            <person name="Copeland A."/>
            <person name="Lucas S."/>
            <person name="Lapidus A."/>
            <person name="Glavina del Rio T."/>
            <person name="Dalin E."/>
            <person name="Tice H."/>
            <person name="Bruce D."/>
            <person name="Goodwin L."/>
            <person name="Pitluck S."/>
            <person name="Chertkov O."/>
            <person name="Brettin T."/>
            <person name="Detter J.C."/>
            <person name="Han C."/>
            <person name="Kuske C.R."/>
            <person name="Schmutz J."/>
            <person name="Larimer F."/>
            <person name="Land M."/>
            <person name="Hauser L."/>
            <person name="Kyrpides N."/>
            <person name="Mikhailova N."/>
            <person name="Marx C."/>
            <person name="Richardson P."/>
        </authorList>
    </citation>
    <scope>NUCLEOTIDE SEQUENCE [LARGE SCALE GENOMIC DNA]</scope>
    <source>
        <strain>ATCC BAA-705 / NCIMB 13946 / BJ001</strain>
    </source>
</reference>
<name>RECO_METPB</name>
<keyword id="KW-0227">DNA damage</keyword>
<keyword id="KW-0233">DNA recombination</keyword>
<keyword id="KW-0234">DNA repair</keyword>
<protein>
    <recommendedName>
        <fullName evidence="1">DNA repair protein RecO</fullName>
    </recommendedName>
    <alternativeName>
        <fullName evidence="1">Recombination protein O</fullName>
    </alternativeName>
</protein>
<evidence type="ECO:0000255" key="1">
    <source>
        <dbReference type="HAMAP-Rule" id="MF_00201"/>
    </source>
</evidence>
<sequence>MQWIDEGLVIGLRKHGETGVVLELMTLEHGRHLGLVHGGRSRRMQPMLQPGNTLRATWRARLDGALGSYAVEPLTLNASRLMDSGLALYGIGHLSTLLRLLPERDPHPALYEAAQVLIAHLDEPEIAPALMVRFELALLAGLGFGLDLSHCAATGANDALVYVSPKSGRAVSASAGEPFRDRLLALPPFLRDRDQPGSGWRTPDAHDVREGFTLTGYFLDQHVWRPRAQDTPEERARFVALGTGQR</sequence>
<gene>
    <name evidence="1" type="primary">recO</name>
    <name type="ordered locus">Mpop_0991</name>
</gene>
<proteinExistence type="inferred from homology"/>
<organism>
    <name type="scientific">Methylorubrum populi (strain ATCC BAA-705 / NCIMB 13946 / BJ001)</name>
    <name type="common">Methylobacterium populi</name>
    <dbReference type="NCBI Taxonomy" id="441620"/>
    <lineage>
        <taxon>Bacteria</taxon>
        <taxon>Pseudomonadati</taxon>
        <taxon>Pseudomonadota</taxon>
        <taxon>Alphaproteobacteria</taxon>
        <taxon>Hyphomicrobiales</taxon>
        <taxon>Methylobacteriaceae</taxon>
        <taxon>Methylorubrum</taxon>
    </lineage>
</organism>
<accession>B1ZA19</accession>
<feature type="chain" id="PRO_1000099390" description="DNA repair protein RecO">
    <location>
        <begin position="1"/>
        <end position="246"/>
    </location>
</feature>